<dbReference type="EMBL" id="CP000253">
    <property type="protein sequence ID" value="ABD30333.1"/>
    <property type="status" value="ALT_FRAME"/>
    <property type="molecule type" value="Genomic_DNA"/>
</dbReference>
<dbReference type="RefSeq" id="WP_000268484.1">
    <property type="nucleotide sequence ID" value="NZ_LS483365.1"/>
</dbReference>
<dbReference type="PDB" id="5LI0">
    <property type="method" value="EM"/>
    <property type="resolution" value="3.80 A"/>
    <property type="chains" value="b=1-255"/>
</dbReference>
<dbReference type="PDB" id="5ND8">
    <property type="method" value="EM"/>
    <property type="resolution" value="3.70 A"/>
    <property type="chains" value="b=1-255"/>
</dbReference>
<dbReference type="PDB" id="5ND9">
    <property type="method" value="EM"/>
    <property type="resolution" value="3.70 A"/>
    <property type="chains" value="b=1-255"/>
</dbReference>
<dbReference type="PDB" id="6YEF">
    <property type="method" value="EM"/>
    <property type="resolution" value="3.20 A"/>
    <property type="chains" value="b=1-255"/>
</dbReference>
<dbReference type="PDB" id="7BGD">
    <property type="method" value="EM"/>
    <property type="resolution" value="3.20 A"/>
    <property type="chains" value="b=1-255"/>
</dbReference>
<dbReference type="PDB" id="7BGE">
    <property type="method" value="EM"/>
    <property type="resolution" value="3.60 A"/>
    <property type="chains" value="b=1-255"/>
</dbReference>
<dbReference type="PDB" id="7KWG">
    <property type="method" value="EM"/>
    <property type="resolution" value="3.75 A"/>
    <property type="chains" value="b=1-255"/>
</dbReference>
<dbReference type="PDB" id="7NHL">
    <property type="method" value="EM"/>
    <property type="resolution" value="3.10 A"/>
    <property type="chains" value="c=1-255"/>
</dbReference>
<dbReference type="PDB" id="7NHM">
    <property type="method" value="EM"/>
    <property type="resolution" value="3.10 A"/>
    <property type="chains" value="c=1-255"/>
</dbReference>
<dbReference type="PDB" id="8BH6">
    <property type="method" value="EM"/>
    <property type="resolution" value="3.70 A"/>
    <property type="chains" value="b=1-255"/>
</dbReference>
<dbReference type="PDB" id="8BH7">
    <property type="method" value="EM"/>
    <property type="resolution" value="4.23 A"/>
    <property type="chains" value="b=1-255"/>
</dbReference>
<dbReference type="PDB" id="8BYV">
    <property type="method" value="EM"/>
    <property type="resolution" value="2.89 A"/>
    <property type="chains" value="b=1-255"/>
</dbReference>
<dbReference type="PDB" id="8P2F">
    <property type="method" value="EM"/>
    <property type="resolution" value="2.44 A"/>
    <property type="chains" value="c=1-255"/>
</dbReference>
<dbReference type="PDB" id="8P2G">
    <property type="method" value="EM"/>
    <property type="resolution" value="2.02 A"/>
    <property type="chains" value="c=1-255"/>
</dbReference>
<dbReference type="PDB" id="8P2H">
    <property type="method" value="EM"/>
    <property type="resolution" value="2.49 A"/>
    <property type="chains" value="c=1-255"/>
</dbReference>
<dbReference type="PDB" id="8Y38">
    <property type="method" value="EM"/>
    <property type="resolution" value="2.58 A"/>
    <property type="chains" value="b=1-228"/>
</dbReference>
<dbReference type="PDB" id="8Y39">
    <property type="method" value="EM"/>
    <property type="resolution" value="3.60 A"/>
    <property type="chains" value="b=1-228"/>
</dbReference>
<dbReference type="PDBsum" id="5LI0"/>
<dbReference type="PDBsum" id="5ND8"/>
<dbReference type="PDBsum" id="5ND9"/>
<dbReference type="PDBsum" id="6YEF"/>
<dbReference type="PDBsum" id="7BGD"/>
<dbReference type="PDBsum" id="7BGE"/>
<dbReference type="PDBsum" id="7KWG"/>
<dbReference type="PDBsum" id="7NHL"/>
<dbReference type="PDBsum" id="7NHM"/>
<dbReference type="PDBsum" id="8BH6"/>
<dbReference type="PDBsum" id="8BH7"/>
<dbReference type="PDBsum" id="8BYV"/>
<dbReference type="PDBsum" id="8P2F"/>
<dbReference type="PDBsum" id="8P2G"/>
<dbReference type="PDBsum" id="8P2H"/>
<dbReference type="PDBsum" id="8Y38"/>
<dbReference type="PDBsum" id="8Y39"/>
<dbReference type="EMDB" id="EMD-10791"/>
<dbReference type="EMDB" id="EMD-12178"/>
<dbReference type="EMDB" id="EMD-12179"/>
<dbReference type="EMDB" id="EMD-12332"/>
<dbReference type="EMDB" id="EMD-12333"/>
<dbReference type="EMDB" id="EMD-16048"/>
<dbReference type="EMDB" id="EMD-16049"/>
<dbReference type="EMDB" id="EMD-16334"/>
<dbReference type="EMDB" id="EMD-17363"/>
<dbReference type="EMDB" id="EMD-17364"/>
<dbReference type="EMDB" id="EMD-17365"/>
<dbReference type="EMDB" id="EMD-23052"/>
<dbReference type="EMDB" id="EMD-3624"/>
<dbReference type="EMDB" id="EMD-3625"/>
<dbReference type="EMDB" id="EMD-4050"/>
<dbReference type="SMR" id="Q2FZ25"/>
<dbReference type="IntAct" id="Q2FZ25">
    <property type="interactions" value="1"/>
</dbReference>
<dbReference type="STRING" id="93061.SAOUHSC_01232"/>
<dbReference type="PaxDb" id="1280-SAXN108_1258"/>
<dbReference type="GeneID" id="98345571"/>
<dbReference type="eggNOG" id="COG0052">
    <property type="taxonomic scope" value="Bacteria"/>
</dbReference>
<dbReference type="HOGENOM" id="CLU_040318_1_2_9"/>
<dbReference type="Proteomes" id="UP000008816">
    <property type="component" value="Chromosome"/>
</dbReference>
<dbReference type="GO" id="GO:0022627">
    <property type="term" value="C:cytosolic small ribosomal subunit"/>
    <property type="evidence" value="ECO:0000318"/>
    <property type="project" value="GO_Central"/>
</dbReference>
<dbReference type="GO" id="GO:0003735">
    <property type="term" value="F:structural constituent of ribosome"/>
    <property type="evidence" value="ECO:0000318"/>
    <property type="project" value="GO_Central"/>
</dbReference>
<dbReference type="GO" id="GO:0006412">
    <property type="term" value="P:translation"/>
    <property type="evidence" value="ECO:0007669"/>
    <property type="project" value="UniProtKB-UniRule"/>
</dbReference>
<dbReference type="CDD" id="cd01425">
    <property type="entry name" value="RPS2"/>
    <property type="match status" value="1"/>
</dbReference>
<dbReference type="FunFam" id="1.10.287.610:FF:000001">
    <property type="entry name" value="30S ribosomal protein S2"/>
    <property type="match status" value="1"/>
</dbReference>
<dbReference type="Gene3D" id="3.40.50.10490">
    <property type="entry name" value="Glucose-6-phosphate isomerase like protein, domain 1"/>
    <property type="match status" value="1"/>
</dbReference>
<dbReference type="Gene3D" id="1.10.287.610">
    <property type="entry name" value="Helix hairpin bin"/>
    <property type="match status" value="1"/>
</dbReference>
<dbReference type="HAMAP" id="MF_00291_B">
    <property type="entry name" value="Ribosomal_uS2_B"/>
    <property type="match status" value="1"/>
</dbReference>
<dbReference type="InterPro" id="IPR001865">
    <property type="entry name" value="Ribosomal_uS2"/>
</dbReference>
<dbReference type="InterPro" id="IPR005706">
    <property type="entry name" value="Ribosomal_uS2_bac/mit/plastid"/>
</dbReference>
<dbReference type="InterPro" id="IPR018130">
    <property type="entry name" value="Ribosomal_uS2_CS"/>
</dbReference>
<dbReference type="InterPro" id="IPR023591">
    <property type="entry name" value="Ribosomal_uS2_flav_dom_sf"/>
</dbReference>
<dbReference type="NCBIfam" id="TIGR01011">
    <property type="entry name" value="rpsB_bact"/>
    <property type="match status" value="1"/>
</dbReference>
<dbReference type="PANTHER" id="PTHR12534">
    <property type="entry name" value="30S RIBOSOMAL PROTEIN S2 PROKARYOTIC AND ORGANELLAR"/>
    <property type="match status" value="1"/>
</dbReference>
<dbReference type="PANTHER" id="PTHR12534:SF0">
    <property type="entry name" value="SMALL RIBOSOMAL SUBUNIT PROTEIN US2M"/>
    <property type="match status" value="1"/>
</dbReference>
<dbReference type="Pfam" id="PF00318">
    <property type="entry name" value="Ribosomal_S2"/>
    <property type="match status" value="1"/>
</dbReference>
<dbReference type="PRINTS" id="PR00395">
    <property type="entry name" value="RIBOSOMALS2"/>
</dbReference>
<dbReference type="SUPFAM" id="SSF52313">
    <property type="entry name" value="Ribosomal protein S2"/>
    <property type="match status" value="1"/>
</dbReference>
<dbReference type="PROSITE" id="PS00962">
    <property type="entry name" value="RIBOSOMAL_S2_1"/>
    <property type="match status" value="1"/>
</dbReference>
<dbReference type="PROSITE" id="PS00963">
    <property type="entry name" value="RIBOSOMAL_S2_2"/>
    <property type="match status" value="1"/>
</dbReference>
<evidence type="ECO:0000255" key="1">
    <source>
        <dbReference type="HAMAP-Rule" id="MF_00291"/>
    </source>
</evidence>
<evidence type="ECO:0000256" key="2">
    <source>
        <dbReference type="SAM" id="MobiDB-lite"/>
    </source>
</evidence>
<evidence type="ECO:0000305" key="3"/>
<evidence type="ECO:0007829" key="4">
    <source>
        <dbReference type="PDB" id="7BGD"/>
    </source>
</evidence>
<evidence type="ECO:0007829" key="5">
    <source>
        <dbReference type="PDB" id="8BYV"/>
    </source>
</evidence>
<sequence>MAVISMKQLLEAGVHFGHQTRRWNPKMKKYIFTERNGIYIIDLQKTVKKVDEAYNFLKQVSEDGGQVLFVGTKKQAQESVKSEAERAGQFYINQRWLGGLLTNYKTISKRIKRISEIEKMEEDGLFEVLPKKEVVELKKEYDRLIKFLGGIRDMKSMPQALFVVDPRKERNAIAEARKLNIPIVGIVDTNCDPDEIDYVIPANDDAIRAVKLLTAKMADAILEGQQGVSNEEVAAEQNIDLDEKEKSEETEATEE</sequence>
<proteinExistence type="evidence at protein level"/>
<keyword id="KW-0002">3D-structure</keyword>
<keyword id="KW-1185">Reference proteome</keyword>
<keyword id="KW-0687">Ribonucleoprotein</keyword>
<keyword id="KW-0689">Ribosomal protein</keyword>
<accession>Q2FZ25</accession>
<reference key="1">
    <citation type="book" date="2006" name="Gram positive pathogens, 2nd edition">
        <title>The Staphylococcus aureus NCTC 8325 genome.</title>
        <editorList>
            <person name="Fischetti V."/>
            <person name="Novick R."/>
            <person name="Ferretti J."/>
            <person name="Portnoy D."/>
            <person name="Rood J."/>
        </editorList>
        <authorList>
            <person name="Gillaspy A.F."/>
            <person name="Worrell V."/>
            <person name="Orvis J."/>
            <person name="Roe B.A."/>
            <person name="Dyer D.W."/>
            <person name="Iandolo J.J."/>
        </authorList>
    </citation>
    <scope>NUCLEOTIDE SEQUENCE [LARGE SCALE GENOMIC DNA]</scope>
    <source>
        <strain>NCTC 8325 / PS 47</strain>
    </source>
</reference>
<protein>
    <recommendedName>
        <fullName evidence="1">Small ribosomal subunit protein uS2</fullName>
    </recommendedName>
    <alternativeName>
        <fullName evidence="3">30S ribosomal protein S2</fullName>
    </alternativeName>
</protein>
<name>RS2_STAA8</name>
<organism>
    <name type="scientific">Staphylococcus aureus (strain NCTC 8325 / PS 47)</name>
    <dbReference type="NCBI Taxonomy" id="93061"/>
    <lineage>
        <taxon>Bacteria</taxon>
        <taxon>Bacillati</taxon>
        <taxon>Bacillota</taxon>
        <taxon>Bacilli</taxon>
        <taxon>Bacillales</taxon>
        <taxon>Staphylococcaceae</taxon>
        <taxon>Staphylococcus</taxon>
    </lineage>
</organism>
<gene>
    <name evidence="1" type="primary">rpsB</name>
    <name type="ordered locus">SAOUHSC_01232</name>
</gene>
<feature type="chain" id="PRO_0000352039" description="Small ribosomal subunit protein uS2">
    <location>
        <begin position="1"/>
        <end position="255"/>
    </location>
</feature>
<feature type="region of interest" description="Disordered" evidence="2">
    <location>
        <begin position="226"/>
        <end position="255"/>
    </location>
</feature>
<feature type="helix" evidence="5">
    <location>
        <begin position="9"/>
        <end position="14"/>
    </location>
</feature>
<feature type="helix" evidence="5">
    <location>
        <begin position="28"/>
        <end position="30"/>
    </location>
</feature>
<feature type="strand" evidence="4">
    <location>
        <begin position="31"/>
        <end position="35"/>
    </location>
</feature>
<feature type="strand" evidence="4">
    <location>
        <begin position="38"/>
        <end position="41"/>
    </location>
</feature>
<feature type="helix" evidence="5">
    <location>
        <begin position="43"/>
        <end position="62"/>
    </location>
</feature>
<feature type="strand" evidence="4">
    <location>
        <begin position="68"/>
        <end position="70"/>
    </location>
</feature>
<feature type="helix" evidence="5">
    <location>
        <begin position="77"/>
        <end position="87"/>
    </location>
</feature>
<feature type="turn" evidence="4">
    <location>
        <begin position="95"/>
        <end position="98"/>
    </location>
</feature>
<feature type="strand" evidence="5">
    <location>
        <begin position="100"/>
        <end position="102"/>
    </location>
</feature>
<feature type="helix" evidence="5">
    <location>
        <begin position="107"/>
        <end position="124"/>
    </location>
</feature>
<feature type="helix" evidence="5">
    <location>
        <begin position="131"/>
        <end position="147"/>
    </location>
</feature>
<feature type="strand" evidence="5">
    <location>
        <begin position="159"/>
        <end position="164"/>
    </location>
</feature>
<feature type="turn" evidence="5">
    <location>
        <begin position="166"/>
        <end position="169"/>
    </location>
</feature>
<feature type="helix" evidence="5">
    <location>
        <begin position="170"/>
        <end position="179"/>
    </location>
</feature>
<feature type="strand" evidence="5">
    <location>
        <begin position="183"/>
        <end position="187"/>
    </location>
</feature>
<feature type="strand" evidence="4">
    <location>
        <begin position="189"/>
        <end position="191"/>
    </location>
</feature>
<feature type="strand" evidence="4">
    <location>
        <begin position="193"/>
        <end position="195"/>
    </location>
</feature>
<feature type="strand" evidence="5">
    <location>
        <begin position="197"/>
        <end position="201"/>
    </location>
</feature>
<feature type="helix" evidence="5">
    <location>
        <begin position="207"/>
        <end position="226"/>
    </location>
</feature>
<comment type="similarity">
    <text evidence="1">Belongs to the universal ribosomal protein uS2 family.</text>
</comment>
<comment type="sequence caution" evidence="3">
    <conflict type="frameshift">
        <sequence resource="EMBL-CDS" id="ABD30333"/>
    </conflict>
</comment>